<comment type="function">
    <text evidence="1">Required for the first step of histidine biosynthesis. May allow the feedback regulation of ATP phosphoribosyltransferase activity by histidine.</text>
</comment>
<comment type="pathway">
    <text evidence="1">Amino-acid biosynthesis; L-histidine biosynthesis; L-histidine from 5-phospho-alpha-D-ribose 1-diphosphate: step 1/9.</text>
</comment>
<comment type="subunit">
    <text evidence="1">Heteromultimer composed of HisG and HisZ subunits.</text>
</comment>
<comment type="subcellular location">
    <subcellularLocation>
        <location evidence="1">Cytoplasm</location>
    </subcellularLocation>
</comment>
<comment type="miscellaneous">
    <text>This function is generally fulfilled by the C-terminal part of HisG, which is missing in some bacteria such as this one.</text>
</comment>
<comment type="similarity">
    <text evidence="1">Belongs to the class-II aminoacyl-tRNA synthetase family. HisZ subfamily.</text>
</comment>
<keyword id="KW-0028">Amino-acid biosynthesis</keyword>
<keyword id="KW-0963">Cytoplasm</keyword>
<keyword id="KW-0368">Histidine biosynthesis</keyword>
<keyword id="KW-1185">Reference proteome</keyword>
<evidence type="ECO:0000255" key="1">
    <source>
        <dbReference type="HAMAP-Rule" id="MF_00125"/>
    </source>
</evidence>
<protein>
    <recommendedName>
        <fullName evidence="1">ATP phosphoribosyltransferase regulatory subunit</fullName>
    </recommendedName>
</protein>
<feature type="chain" id="PRO_0000242863" description="ATP phosphoribosyltransferase regulatory subunit">
    <location>
        <begin position="1"/>
        <end position="392"/>
    </location>
</feature>
<accession>Q3AXX8</accession>
<name>HISZ_SYNS9</name>
<dbReference type="EMBL" id="CP000097">
    <property type="protein sequence ID" value="ABB26049.1"/>
    <property type="molecule type" value="Genomic_DNA"/>
</dbReference>
<dbReference type="RefSeq" id="WP_011359879.1">
    <property type="nucleotide sequence ID" value="NC_007513.1"/>
</dbReference>
<dbReference type="SMR" id="Q3AXX8"/>
<dbReference type="STRING" id="316279.Syncc9902_1085"/>
<dbReference type="KEGG" id="sye:Syncc9902_1085"/>
<dbReference type="eggNOG" id="COG3705">
    <property type="taxonomic scope" value="Bacteria"/>
</dbReference>
<dbReference type="HOGENOM" id="CLU_025113_0_2_3"/>
<dbReference type="OrthoDB" id="9800814at2"/>
<dbReference type="UniPathway" id="UPA00031">
    <property type="reaction ID" value="UER00006"/>
</dbReference>
<dbReference type="Proteomes" id="UP000002712">
    <property type="component" value="Chromosome"/>
</dbReference>
<dbReference type="GO" id="GO:0005737">
    <property type="term" value="C:cytoplasm"/>
    <property type="evidence" value="ECO:0007669"/>
    <property type="project" value="UniProtKB-SubCell"/>
</dbReference>
<dbReference type="GO" id="GO:0004821">
    <property type="term" value="F:histidine-tRNA ligase activity"/>
    <property type="evidence" value="ECO:0007669"/>
    <property type="project" value="TreeGrafter"/>
</dbReference>
<dbReference type="GO" id="GO:0006427">
    <property type="term" value="P:histidyl-tRNA aminoacylation"/>
    <property type="evidence" value="ECO:0007669"/>
    <property type="project" value="TreeGrafter"/>
</dbReference>
<dbReference type="GO" id="GO:0000105">
    <property type="term" value="P:L-histidine biosynthetic process"/>
    <property type="evidence" value="ECO:0007669"/>
    <property type="project" value="UniProtKB-UniRule"/>
</dbReference>
<dbReference type="Gene3D" id="3.30.930.10">
    <property type="entry name" value="Bira Bifunctional Protein, Domain 2"/>
    <property type="match status" value="1"/>
</dbReference>
<dbReference type="HAMAP" id="MF_00125">
    <property type="entry name" value="HisZ"/>
    <property type="match status" value="1"/>
</dbReference>
<dbReference type="InterPro" id="IPR006195">
    <property type="entry name" value="aa-tRNA-synth_II"/>
</dbReference>
<dbReference type="InterPro" id="IPR045864">
    <property type="entry name" value="aa-tRNA-synth_II/BPL/LPL"/>
</dbReference>
<dbReference type="InterPro" id="IPR041715">
    <property type="entry name" value="HisRS-like_core"/>
</dbReference>
<dbReference type="InterPro" id="IPR004516">
    <property type="entry name" value="HisRS/HisZ"/>
</dbReference>
<dbReference type="InterPro" id="IPR004517">
    <property type="entry name" value="HisZ"/>
</dbReference>
<dbReference type="NCBIfam" id="NF008939">
    <property type="entry name" value="PRK12292.2-1"/>
    <property type="match status" value="1"/>
</dbReference>
<dbReference type="PANTHER" id="PTHR43707:SF1">
    <property type="entry name" value="HISTIDINE--TRNA LIGASE, MITOCHONDRIAL-RELATED"/>
    <property type="match status" value="1"/>
</dbReference>
<dbReference type="PANTHER" id="PTHR43707">
    <property type="entry name" value="HISTIDYL-TRNA SYNTHETASE"/>
    <property type="match status" value="1"/>
</dbReference>
<dbReference type="Pfam" id="PF13393">
    <property type="entry name" value="tRNA-synt_His"/>
    <property type="match status" value="1"/>
</dbReference>
<dbReference type="PIRSF" id="PIRSF001549">
    <property type="entry name" value="His-tRNA_synth"/>
    <property type="match status" value="1"/>
</dbReference>
<dbReference type="SUPFAM" id="SSF55681">
    <property type="entry name" value="Class II aaRS and biotin synthetases"/>
    <property type="match status" value="1"/>
</dbReference>
<dbReference type="PROSITE" id="PS50862">
    <property type="entry name" value="AA_TRNA_LIGASE_II"/>
    <property type="match status" value="1"/>
</dbReference>
<proteinExistence type="inferred from homology"/>
<reference key="1">
    <citation type="submission" date="2005-08" db="EMBL/GenBank/DDBJ databases">
        <title>Complete sequence of Synechococcus sp. CC9902.</title>
        <authorList>
            <person name="Copeland A."/>
            <person name="Lucas S."/>
            <person name="Lapidus A."/>
            <person name="Barry K."/>
            <person name="Detter J.C."/>
            <person name="Glavina T."/>
            <person name="Hammon N."/>
            <person name="Israni S."/>
            <person name="Pitluck S."/>
            <person name="Martinez M."/>
            <person name="Schmutz J."/>
            <person name="Larimer F."/>
            <person name="Land M."/>
            <person name="Kyrpides N."/>
            <person name="Ivanova N."/>
            <person name="Richardson P."/>
        </authorList>
    </citation>
    <scope>NUCLEOTIDE SEQUENCE [LARGE SCALE GENOMIC DNA]</scope>
    <source>
        <strain>CC9902</strain>
    </source>
</reference>
<sequence>MALQPAAGARDLNPHQVETNRNITERLARVFRLWGYDEVSPPRVERMKTLMAGGAIASRDIVRLVADDPLGLRPEMTASIARAACTRLATRPRPMRLWASGTVFRSRAADEGGQCIEENLQSGVELFGVAAIEAEMELLSLLMASIASLKLGPSTQPRLLLGHTQLMELILSPYEGPKRDAVRWALVHFDRLAVETMELLPNERKTLLSLMECRGTPKDVLQQLRHLFGQQPVFEDLDRLCSLLSKTALEQDIALQLDPTFQPQFELYTGLVFQLVCNGRSAPVVLARGGRYDELVQRCGAPENQAFGAGFSLAIDPIRELLVEDESAKADTTDVLVAYSSNSNLETALDHQQQWHAKGHSAVLELQPIRSMDEAQALAQARGDLQLDWVDL</sequence>
<organism>
    <name type="scientific">Synechococcus sp. (strain CC9902)</name>
    <dbReference type="NCBI Taxonomy" id="316279"/>
    <lineage>
        <taxon>Bacteria</taxon>
        <taxon>Bacillati</taxon>
        <taxon>Cyanobacteriota</taxon>
        <taxon>Cyanophyceae</taxon>
        <taxon>Synechococcales</taxon>
        <taxon>Synechococcaceae</taxon>
        <taxon>Synechococcus</taxon>
    </lineage>
</organism>
<gene>
    <name evidence="1" type="primary">hisZ</name>
    <name type="ordered locus">Syncc9902_1085</name>
</gene>